<evidence type="ECO:0000255" key="1">
    <source>
        <dbReference type="HAMAP-Rule" id="MF_01825"/>
    </source>
</evidence>
<feature type="chain" id="PRO_0000297443" description="Erythronate-4-phosphate dehydrogenase">
    <location>
        <begin position="1"/>
        <end position="381"/>
    </location>
</feature>
<feature type="active site" evidence="1">
    <location>
        <position position="209"/>
    </location>
</feature>
<feature type="active site" evidence="1">
    <location>
        <position position="238"/>
    </location>
</feature>
<feature type="active site" description="Proton donor" evidence="1">
    <location>
        <position position="255"/>
    </location>
</feature>
<feature type="binding site" evidence="1">
    <location>
        <position position="45"/>
    </location>
    <ligand>
        <name>substrate</name>
    </ligand>
</feature>
<feature type="binding site" evidence="1">
    <location>
        <position position="67"/>
    </location>
    <ligand>
        <name>substrate</name>
    </ligand>
</feature>
<feature type="binding site" evidence="1">
    <location>
        <position position="148"/>
    </location>
    <ligand>
        <name>NAD(+)</name>
        <dbReference type="ChEBI" id="CHEBI:57540"/>
    </ligand>
</feature>
<feature type="binding site" evidence="1">
    <location>
        <begin position="207"/>
        <end position="209"/>
    </location>
    <ligand>
        <name>NAD(+)</name>
        <dbReference type="ChEBI" id="CHEBI:57540"/>
    </ligand>
</feature>
<feature type="binding site" evidence="1">
    <location>
        <position position="233"/>
    </location>
    <ligand>
        <name>NAD(+)</name>
        <dbReference type="ChEBI" id="CHEBI:57540"/>
    </ligand>
</feature>
<feature type="binding site" evidence="1">
    <location>
        <position position="258"/>
    </location>
    <ligand>
        <name>NAD(+)</name>
        <dbReference type="ChEBI" id="CHEBI:57540"/>
    </ligand>
</feature>
<proteinExistence type="inferred from homology"/>
<comment type="function">
    <text evidence="1">Catalyzes the oxidation of erythronate-4-phosphate to 3-hydroxy-2-oxo-4-phosphonooxybutanoate.</text>
</comment>
<comment type="catalytic activity">
    <reaction evidence="1">
        <text>4-phospho-D-erythronate + NAD(+) = (R)-3-hydroxy-2-oxo-4-phosphooxybutanoate + NADH + H(+)</text>
        <dbReference type="Rhea" id="RHEA:18829"/>
        <dbReference type="ChEBI" id="CHEBI:15378"/>
        <dbReference type="ChEBI" id="CHEBI:57540"/>
        <dbReference type="ChEBI" id="CHEBI:57945"/>
        <dbReference type="ChEBI" id="CHEBI:58538"/>
        <dbReference type="ChEBI" id="CHEBI:58766"/>
        <dbReference type="EC" id="1.1.1.290"/>
    </reaction>
</comment>
<comment type="pathway">
    <text evidence="1">Cofactor biosynthesis; pyridoxine 5'-phosphate biosynthesis; pyridoxine 5'-phosphate from D-erythrose 4-phosphate: step 2/5.</text>
</comment>
<comment type="subunit">
    <text evidence="1">Homodimer.</text>
</comment>
<comment type="subcellular location">
    <subcellularLocation>
        <location evidence="1">Cytoplasm</location>
    </subcellularLocation>
</comment>
<comment type="similarity">
    <text evidence="1">Belongs to the D-isomer specific 2-hydroxyacid dehydrogenase family. PdxB subfamily.</text>
</comment>
<gene>
    <name evidence="1" type="primary">pdxB</name>
    <name type="ordered locus">IL1020</name>
</gene>
<name>PDXB_IDILO</name>
<protein>
    <recommendedName>
        <fullName evidence="1">Erythronate-4-phosphate dehydrogenase</fullName>
        <ecNumber evidence="1">1.1.1.290</ecNumber>
    </recommendedName>
</protein>
<accession>Q5QUE2</accession>
<reference key="1">
    <citation type="journal article" date="2004" name="Proc. Natl. Acad. Sci. U.S.A.">
        <title>Genome sequence of the deep-sea gamma-proteobacterium Idiomarina loihiensis reveals amino acid fermentation as a source of carbon and energy.</title>
        <authorList>
            <person name="Hou S."/>
            <person name="Saw J.H."/>
            <person name="Lee K.S."/>
            <person name="Freitas T.A."/>
            <person name="Belisle C."/>
            <person name="Kawarabayasi Y."/>
            <person name="Donachie S.P."/>
            <person name="Pikina A."/>
            <person name="Galperin M.Y."/>
            <person name="Koonin E.V."/>
            <person name="Makarova K.S."/>
            <person name="Omelchenko M.V."/>
            <person name="Sorokin A."/>
            <person name="Wolf Y.I."/>
            <person name="Li Q.X."/>
            <person name="Keum Y.S."/>
            <person name="Campbell S."/>
            <person name="Denery J."/>
            <person name="Aizawa S."/>
            <person name="Shibata S."/>
            <person name="Malahoff A."/>
            <person name="Alam M."/>
        </authorList>
    </citation>
    <scope>NUCLEOTIDE SEQUENCE [LARGE SCALE GENOMIC DNA]</scope>
    <source>
        <strain>ATCC BAA-735 / DSM 15497 / L2-TR</strain>
    </source>
</reference>
<organism>
    <name type="scientific">Idiomarina loihiensis (strain ATCC BAA-735 / DSM 15497 / L2-TR)</name>
    <dbReference type="NCBI Taxonomy" id="283942"/>
    <lineage>
        <taxon>Bacteria</taxon>
        <taxon>Pseudomonadati</taxon>
        <taxon>Pseudomonadota</taxon>
        <taxon>Gammaproteobacteria</taxon>
        <taxon>Alteromonadales</taxon>
        <taxon>Idiomarinaceae</taxon>
        <taxon>Idiomarina</taxon>
    </lineage>
</organism>
<keyword id="KW-0963">Cytoplasm</keyword>
<keyword id="KW-0520">NAD</keyword>
<keyword id="KW-0560">Oxidoreductase</keyword>
<keyword id="KW-0664">Pyridoxine biosynthesis</keyword>
<keyword id="KW-1185">Reference proteome</keyword>
<sequence length="381" mass="42036">MKIVADQNIPALSDLLSGAGTLSYFSERIPPQKLLAEADALLVRSVTQVDEVLLEQAPELKFVASATIGTEHINLQALEERGIGFAHAPGANAQSVGEYVLCAVLNWLSDQPRYVADEIDVAIVGAGHTGKAAGKRLEALGLNVHYYDPPLCKKGVKFVHDHWQRVLTADIISCHVPLTRDGDFPTQHLFENTALQSLHSQQLLINASRGAVIDNNALLERVEQGERPSLVLDVWENEPEVLSGLVPYVDIATPHIAGHSLEGKVGGAVMISNALLEHFGKPADKTLSDVLPGKAWNERDAGGLNSLESLNLWAKEHYDLFRDDELFRQQGLTTEGFDSLRRNYRKESPRREFINQVVTCHNSEQYIQFLQLGFSARLLSK</sequence>
<dbReference type="EC" id="1.1.1.290" evidence="1"/>
<dbReference type="EMBL" id="AE017340">
    <property type="protein sequence ID" value="AAV81860.1"/>
    <property type="molecule type" value="Genomic_DNA"/>
</dbReference>
<dbReference type="RefSeq" id="WP_011234271.1">
    <property type="nucleotide sequence ID" value="NC_006512.1"/>
</dbReference>
<dbReference type="SMR" id="Q5QUE2"/>
<dbReference type="STRING" id="283942.IL1020"/>
<dbReference type="GeneID" id="41336186"/>
<dbReference type="KEGG" id="ilo:IL1020"/>
<dbReference type="eggNOG" id="COG0111">
    <property type="taxonomic scope" value="Bacteria"/>
</dbReference>
<dbReference type="HOGENOM" id="CLU_019796_4_0_6"/>
<dbReference type="OrthoDB" id="9770208at2"/>
<dbReference type="UniPathway" id="UPA00244">
    <property type="reaction ID" value="UER00310"/>
</dbReference>
<dbReference type="Proteomes" id="UP000001171">
    <property type="component" value="Chromosome"/>
</dbReference>
<dbReference type="GO" id="GO:0005737">
    <property type="term" value="C:cytoplasm"/>
    <property type="evidence" value="ECO:0007669"/>
    <property type="project" value="UniProtKB-SubCell"/>
</dbReference>
<dbReference type="GO" id="GO:0033711">
    <property type="term" value="F:4-phosphoerythronate dehydrogenase activity"/>
    <property type="evidence" value="ECO:0007669"/>
    <property type="project" value="UniProtKB-EC"/>
</dbReference>
<dbReference type="GO" id="GO:0051287">
    <property type="term" value="F:NAD binding"/>
    <property type="evidence" value="ECO:0007669"/>
    <property type="project" value="InterPro"/>
</dbReference>
<dbReference type="GO" id="GO:0046983">
    <property type="term" value="F:protein dimerization activity"/>
    <property type="evidence" value="ECO:0007669"/>
    <property type="project" value="InterPro"/>
</dbReference>
<dbReference type="GO" id="GO:0008615">
    <property type="term" value="P:pyridoxine biosynthetic process"/>
    <property type="evidence" value="ECO:0007669"/>
    <property type="project" value="UniProtKB-UniRule"/>
</dbReference>
<dbReference type="CDD" id="cd12158">
    <property type="entry name" value="ErythrP_dh"/>
    <property type="match status" value="1"/>
</dbReference>
<dbReference type="Gene3D" id="3.30.1370.170">
    <property type="match status" value="1"/>
</dbReference>
<dbReference type="Gene3D" id="3.40.50.720">
    <property type="entry name" value="NAD(P)-binding Rossmann-like Domain"/>
    <property type="match status" value="2"/>
</dbReference>
<dbReference type="HAMAP" id="MF_01825">
    <property type="entry name" value="PdxB"/>
    <property type="match status" value="1"/>
</dbReference>
<dbReference type="InterPro" id="IPR050223">
    <property type="entry name" value="D-isomer_2-hydroxyacid_DH"/>
</dbReference>
<dbReference type="InterPro" id="IPR006139">
    <property type="entry name" value="D-isomer_2_OHA_DH_cat_dom"/>
</dbReference>
<dbReference type="InterPro" id="IPR006140">
    <property type="entry name" value="D-isomer_DH_NAD-bd"/>
</dbReference>
<dbReference type="InterPro" id="IPR020921">
    <property type="entry name" value="Erythronate-4-P_DHase"/>
</dbReference>
<dbReference type="InterPro" id="IPR024531">
    <property type="entry name" value="Erythronate-4-P_DHase_dimer"/>
</dbReference>
<dbReference type="InterPro" id="IPR036291">
    <property type="entry name" value="NAD(P)-bd_dom_sf"/>
</dbReference>
<dbReference type="InterPro" id="IPR038251">
    <property type="entry name" value="PdxB_dimer_sf"/>
</dbReference>
<dbReference type="PANTHER" id="PTHR10996">
    <property type="entry name" value="2-HYDROXYACID DEHYDROGENASE-RELATED"/>
    <property type="match status" value="1"/>
</dbReference>
<dbReference type="Pfam" id="PF00389">
    <property type="entry name" value="2-Hacid_dh"/>
    <property type="match status" value="1"/>
</dbReference>
<dbReference type="Pfam" id="PF02826">
    <property type="entry name" value="2-Hacid_dh_C"/>
    <property type="match status" value="1"/>
</dbReference>
<dbReference type="Pfam" id="PF11890">
    <property type="entry name" value="DUF3410"/>
    <property type="match status" value="1"/>
</dbReference>
<dbReference type="SUPFAM" id="SSF52283">
    <property type="entry name" value="Formate/glycerate dehydrogenase catalytic domain-like"/>
    <property type="match status" value="1"/>
</dbReference>
<dbReference type="SUPFAM" id="SSF51735">
    <property type="entry name" value="NAD(P)-binding Rossmann-fold domains"/>
    <property type="match status" value="1"/>
</dbReference>